<comment type="function">
    <text evidence="1">Catalyzes the covalent attachment of the prokaryotic ubiquitin-like protein modifier Pup to the proteasomal substrate proteins, thereby targeting them for proteasomal degradation. This tagging system is termed pupylation. The ligation reaction involves the side-chain carboxylate of the C-terminal glutamate of Pup and the side-chain amino group of a substrate lysine.</text>
</comment>
<comment type="catalytic activity">
    <reaction evidence="1">
        <text>ATP + [prokaryotic ubiquitin-like protein]-L-glutamate + [protein]-L-lysine = ADP + phosphate + N(6)-([prokaryotic ubiquitin-like protein]-gamma-L-glutamyl)-[protein]-L-lysine.</text>
        <dbReference type="EC" id="6.3.1.19"/>
    </reaction>
</comment>
<comment type="pathway">
    <text evidence="1">Protein degradation; proteasomal Pup-dependent pathway.</text>
</comment>
<comment type="pathway">
    <text evidence="1">Protein modification; protein pupylation.</text>
</comment>
<comment type="miscellaneous">
    <text evidence="1">The reaction mechanism probably proceeds via the activation of Pup by phosphorylation of its C-terminal glutamate, which is then subject to nucleophilic attack by the substrate lysine, resulting in an isopeptide bond and the release of phosphate as a good leaving group.</text>
</comment>
<comment type="similarity">
    <text evidence="1">Belongs to the Pup ligase/Pup deamidase family. Pup-conjugating enzyme subfamily.</text>
</comment>
<reference key="1">
    <citation type="journal article" date="2008" name="J. Bacteriol.">
        <title>Complete genome sequence of the soil actinomycete Kocuria rhizophila.</title>
        <authorList>
            <person name="Takarada H."/>
            <person name="Sekine M."/>
            <person name="Kosugi H."/>
            <person name="Matsuo Y."/>
            <person name="Fujisawa T."/>
            <person name="Omata S."/>
            <person name="Kishi E."/>
            <person name="Shimizu A."/>
            <person name="Tsukatani N."/>
            <person name="Tanikawa S."/>
            <person name="Fujita N."/>
            <person name="Harayama S."/>
        </authorList>
    </citation>
    <scope>NUCLEOTIDE SEQUENCE [LARGE SCALE GENOMIC DNA]</scope>
    <source>
        <strain>ATCC 9341 / DSM 348 / NBRC 103217 / DC2201</strain>
    </source>
</reference>
<accession>B2GIN9</accession>
<name>PAFA_KOCRD</name>
<gene>
    <name evidence="1" type="primary">pafA</name>
    <name type="ordered locus">KRH_13850</name>
</gene>
<feature type="chain" id="PRO_0000395920" description="Pup--protein ligase">
    <location>
        <begin position="1"/>
        <end position="469"/>
    </location>
</feature>
<feature type="active site" description="Proton acceptor" evidence="1">
    <location>
        <position position="57"/>
    </location>
</feature>
<feature type="binding site" evidence="1">
    <location>
        <position position="9"/>
    </location>
    <ligand>
        <name>Mg(2+)</name>
        <dbReference type="ChEBI" id="CHEBI:18420"/>
    </ligand>
</feature>
<feature type="binding site" evidence="1">
    <location>
        <position position="53"/>
    </location>
    <ligand>
        <name>ATP</name>
        <dbReference type="ChEBI" id="CHEBI:30616"/>
    </ligand>
</feature>
<feature type="binding site" evidence="1">
    <location>
        <position position="55"/>
    </location>
    <ligand>
        <name>Mg(2+)</name>
        <dbReference type="ChEBI" id="CHEBI:18420"/>
    </ligand>
</feature>
<feature type="binding site" evidence="1">
    <location>
        <position position="63"/>
    </location>
    <ligand>
        <name>Mg(2+)</name>
        <dbReference type="ChEBI" id="CHEBI:18420"/>
    </ligand>
</feature>
<feature type="binding site" evidence="1">
    <location>
        <position position="66"/>
    </location>
    <ligand>
        <name>ATP</name>
        <dbReference type="ChEBI" id="CHEBI:30616"/>
    </ligand>
</feature>
<feature type="binding site" evidence="1">
    <location>
        <position position="430"/>
    </location>
    <ligand>
        <name>ATP</name>
        <dbReference type="ChEBI" id="CHEBI:30616"/>
    </ligand>
</feature>
<proteinExistence type="inferred from homology"/>
<dbReference type="EC" id="6.3.1.19" evidence="1"/>
<dbReference type="EMBL" id="AP009152">
    <property type="protein sequence ID" value="BAG29732.1"/>
    <property type="molecule type" value="Genomic_DNA"/>
</dbReference>
<dbReference type="RefSeq" id="WP_012398453.1">
    <property type="nucleotide sequence ID" value="NC_010617.1"/>
</dbReference>
<dbReference type="SMR" id="B2GIN9"/>
<dbReference type="STRING" id="378753.KRH_13850"/>
<dbReference type="MEROPS" id="U72.001"/>
<dbReference type="KEGG" id="krh:KRH_13850"/>
<dbReference type="eggNOG" id="COG0638">
    <property type="taxonomic scope" value="Bacteria"/>
</dbReference>
<dbReference type="HOGENOM" id="CLU_040524_0_1_11"/>
<dbReference type="OrthoDB" id="9760627at2"/>
<dbReference type="BRENDA" id="6.3.1.19">
    <property type="organism ID" value="15203"/>
</dbReference>
<dbReference type="UniPathway" id="UPA00997"/>
<dbReference type="UniPathway" id="UPA00998"/>
<dbReference type="Proteomes" id="UP000008838">
    <property type="component" value="Chromosome"/>
</dbReference>
<dbReference type="GO" id="GO:0005524">
    <property type="term" value="F:ATP binding"/>
    <property type="evidence" value="ECO:0007669"/>
    <property type="project" value="UniProtKB-UniRule"/>
</dbReference>
<dbReference type="GO" id="GO:0016879">
    <property type="term" value="F:ligase activity, forming carbon-nitrogen bonds"/>
    <property type="evidence" value="ECO:0007669"/>
    <property type="project" value="InterPro"/>
</dbReference>
<dbReference type="GO" id="GO:0000287">
    <property type="term" value="F:magnesium ion binding"/>
    <property type="evidence" value="ECO:0007669"/>
    <property type="project" value="UniProtKB-UniRule"/>
</dbReference>
<dbReference type="GO" id="GO:0019787">
    <property type="term" value="F:ubiquitin-like protein transferase activity"/>
    <property type="evidence" value="ECO:0007669"/>
    <property type="project" value="UniProtKB-UniRule"/>
</dbReference>
<dbReference type="GO" id="GO:0019941">
    <property type="term" value="P:modification-dependent protein catabolic process"/>
    <property type="evidence" value="ECO:0007669"/>
    <property type="project" value="UniProtKB-UniRule"/>
</dbReference>
<dbReference type="GO" id="GO:0010498">
    <property type="term" value="P:proteasomal protein catabolic process"/>
    <property type="evidence" value="ECO:0007669"/>
    <property type="project" value="UniProtKB-UniRule"/>
</dbReference>
<dbReference type="GO" id="GO:0070490">
    <property type="term" value="P:protein pupylation"/>
    <property type="evidence" value="ECO:0007669"/>
    <property type="project" value="UniProtKB-UniRule"/>
</dbReference>
<dbReference type="HAMAP" id="MF_02111">
    <property type="entry name" value="Pup_ligase"/>
    <property type="match status" value="1"/>
</dbReference>
<dbReference type="InterPro" id="IPR022279">
    <property type="entry name" value="Pup_ligase"/>
</dbReference>
<dbReference type="InterPro" id="IPR004347">
    <property type="entry name" value="Pup_ligase/deamidase"/>
</dbReference>
<dbReference type="NCBIfam" id="TIGR03686">
    <property type="entry name" value="pupylate_PafA"/>
    <property type="match status" value="1"/>
</dbReference>
<dbReference type="PANTHER" id="PTHR42307">
    <property type="entry name" value="PUP DEAMIDASE/DEPUPYLASE"/>
    <property type="match status" value="1"/>
</dbReference>
<dbReference type="PANTHER" id="PTHR42307:SF3">
    <property type="entry name" value="PUP--PROTEIN LIGASE"/>
    <property type="match status" value="1"/>
</dbReference>
<dbReference type="Pfam" id="PF03136">
    <property type="entry name" value="Pup_ligase"/>
    <property type="match status" value="1"/>
</dbReference>
<keyword id="KW-0067">ATP-binding</keyword>
<keyword id="KW-0436">Ligase</keyword>
<keyword id="KW-0460">Magnesium</keyword>
<keyword id="KW-0479">Metal-binding</keyword>
<keyword id="KW-0547">Nucleotide-binding</keyword>
<keyword id="KW-1185">Reference proteome</keyword>
<keyword id="KW-0833">Ubl conjugation pathway</keyword>
<protein>
    <recommendedName>
        <fullName evidence="1">Pup--protein ligase</fullName>
        <ecNumber evidence="1">6.3.1.19</ecNumber>
    </recommendedName>
    <alternativeName>
        <fullName evidence="1">Proteasome accessory factor A</fullName>
    </alternativeName>
    <alternativeName>
        <fullName evidence="1">Pup-conjugating enzyme</fullName>
    </alternativeName>
</protein>
<evidence type="ECO:0000255" key="1">
    <source>
        <dbReference type="HAMAP-Rule" id="MF_02111"/>
    </source>
</evidence>
<sequence>MDRRIYGIETEFGLTHSAPEGPALSADDAARRLFAPVLAWGRASNVFLPNGGRLYLDVGSHPEYATAEAATLHDVVAQDAAGERIVDELRSRLQESLDAEGVRGTVHLFKNNVDSAGNAFGSHENYMIARSTEFSRLLGHLLPFLVTRQILVGAGKVHPSGPPAFGAFAPGDGAASYSFSQRADHIWEGSSSATTRSRPMINTRDEPHADAQHYRRLHVITGDSNMSQTTTALKIGATDLLLRMIEAGQILPDRTLADPASALRQVSHDLTGTARLALADGSSRTALELQHEVLEAVTRFVQRHGAHHDRVPWVLELWERGLRAVAEQNASLVDRELDWAVKKKLLDAYAASHGMDLSHPRLAQLDLAYHDTSPTHGLFHMLERRGAVESFVSPQDVSRAVGQAPETRARLRGRFVAAAHAADVNHTVDWVHLKLNGPHSQRISMCKDPFATTQPDVEEMIRDLAAGAV</sequence>
<organism>
    <name type="scientific">Kocuria rhizophila (strain ATCC 9341 / DSM 348 / NBRC 103217 / DC2201)</name>
    <dbReference type="NCBI Taxonomy" id="378753"/>
    <lineage>
        <taxon>Bacteria</taxon>
        <taxon>Bacillati</taxon>
        <taxon>Actinomycetota</taxon>
        <taxon>Actinomycetes</taxon>
        <taxon>Micrococcales</taxon>
        <taxon>Micrococcaceae</taxon>
        <taxon>Kocuria</taxon>
    </lineage>
</organism>